<dbReference type="EC" id="2.7.7.23" evidence="1"/>
<dbReference type="EC" id="2.3.1.157" evidence="1"/>
<dbReference type="EMBL" id="AE017282">
    <property type="protein sequence ID" value="AAU90741.1"/>
    <property type="molecule type" value="Genomic_DNA"/>
</dbReference>
<dbReference type="RefSeq" id="WP_010959387.1">
    <property type="nucleotide sequence ID" value="NC_002977.6"/>
</dbReference>
<dbReference type="SMR" id="Q60CR2"/>
<dbReference type="STRING" id="243233.MCA0014"/>
<dbReference type="GeneID" id="88222367"/>
<dbReference type="KEGG" id="mca:MCA0014"/>
<dbReference type="eggNOG" id="COG1207">
    <property type="taxonomic scope" value="Bacteria"/>
</dbReference>
<dbReference type="HOGENOM" id="CLU_029499_15_2_6"/>
<dbReference type="UniPathway" id="UPA00113">
    <property type="reaction ID" value="UER00532"/>
</dbReference>
<dbReference type="UniPathway" id="UPA00113">
    <property type="reaction ID" value="UER00533"/>
</dbReference>
<dbReference type="UniPathway" id="UPA00973"/>
<dbReference type="Proteomes" id="UP000006821">
    <property type="component" value="Chromosome"/>
</dbReference>
<dbReference type="GO" id="GO:0005737">
    <property type="term" value="C:cytoplasm"/>
    <property type="evidence" value="ECO:0007669"/>
    <property type="project" value="UniProtKB-SubCell"/>
</dbReference>
<dbReference type="GO" id="GO:0016020">
    <property type="term" value="C:membrane"/>
    <property type="evidence" value="ECO:0007669"/>
    <property type="project" value="GOC"/>
</dbReference>
<dbReference type="GO" id="GO:0019134">
    <property type="term" value="F:glucosamine-1-phosphate N-acetyltransferase activity"/>
    <property type="evidence" value="ECO:0007669"/>
    <property type="project" value="UniProtKB-UniRule"/>
</dbReference>
<dbReference type="GO" id="GO:0000287">
    <property type="term" value="F:magnesium ion binding"/>
    <property type="evidence" value="ECO:0007669"/>
    <property type="project" value="UniProtKB-UniRule"/>
</dbReference>
<dbReference type="GO" id="GO:0003977">
    <property type="term" value="F:UDP-N-acetylglucosamine diphosphorylase activity"/>
    <property type="evidence" value="ECO:0007669"/>
    <property type="project" value="UniProtKB-UniRule"/>
</dbReference>
<dbReference type="GO" id="GO:0000902">
    <property type="term" value="P:cell morphogenesis"/>
    <property type="evidence" value="ECO:0007669"/>
    <property type="project" value="UniProtKB-UniRule"/>
</dbReference>
<dbReference type="GO" id="GO:0071555">
    <property type="term" value="P:cell wall organization"/>
    <property type="evidence" value="ECO:0007669"/>
    <property type="project" value="UniProtKB-KW"/>
</dbReference>
<dbReference type="GO" id="GO:0009245">
    <property type="term" value="P:lipid A biosynthetic process"/>
    <property type="evidence" value="ECO:0007669"/>
    <property type="project" value="UniProtKB-UniRule"/>
</dbReference>
<dbReference type="GO" id="GO:0009252">
    <property type="term" value="P:peptidoglycan biosynthetic process"/>
    <property type="evidence" value="ECO:0007669"/>
    <property type="project" value="UniProtKB-UniRule"/>
</dbReference>
<dbReference type="GO" id="GO:0008360">
    <property type="term" value="P:regulation of cell shape"/>
    <property type="evidence" value="ECO:0007669"/>
    <property type="project" value="UniProtKB-KW"/>
</dbReference>
<dbReference type="GO" id="GO:0006048">
    <property type="term" value="P:UDP-N-acetylglucosamine biosynthetic process"/>
    <property type="evidence" value="ECO:0007669"/>
    <property type="project" value="UniProtKB-UniPathway"/>
</dbReference>
<dbReference type="CDD" id="cd02540">
    <property type="entry name" value="GT2_GlmU_N_bac"/>
    <property type="match status" value="1"/>
</dbReference>
<dbReference type="CDD" id="cd03353">
    <property type="entry name" value="LbH_GlmU_C"/>
    <property type="match status" value="1"/>
</dbReference>
<dbReference type="Gene3D" id="2.160.10.10">
    <property type="entry name" value="Hexapeptide repeat proteins"/>
    <property type="match status" value="1"/>
</dbReference>
<dbReference type="Gene3D" id="3.90.550.10">
    <property type="entry name" value="Spore Coat Polysaccharide Biosynthesis Protein SpsA, Chain A"/>
    <property type="match status" value="1"/>
</dbReference>
<dbReference type="HAMAP" id="MF_01631">
    <property type="entry name" value="GlmU"/>
    <property type="match status" value="1"/>
</dbReference>
<dbReference type="InterPro" id="IPR005882">
    <property type="entry name" value="Bifunctional_GlmU"/>
</dbReference>
<dbReference type="InterPro" id="IPR050065">
    <property type="entry name" value="GlmU-like"/>
</dbReference>
<dbReference type="InterPro" id="IPR038009">
    <property type="entry name" value="GlmU_C_LbH"/>
</dbReference>
<dbReference type="InterPro" id="IPR001451">
    <property type="entry name" value="Hexapep"/>
</dbReference>
<dbReference type="InterPro" id="IPR018357">
    <property type="entry name" value="Hexapep_transf_CS"/>
</dbReference>
<dbReference type="InterPro" id="IPR025877">
    <property type="entry name" value="MobA-like_NTP_Trfase"/>
</dbReference>
<dbReference type="InterPro" id="IPR029044">
    <property type="entry name" value="Nucleotide-diphossugar_trans"/>
</dbReference>
<dbReference type="InterPro" id="IPR011004">
    <property type="entry name" value="Trimer_LpxA-like_sf"/>
</dbReference>
<dbReference type="NCBIfam" id="TIGR01173">
    <property type="entry name" value="glmU"/>
    <property type="match status" value="1"/>
</dbReference>
<dbReference type="PANTHER" id="PTHR43584:SF3">
    <property type="entry name" value="BIFUNCTIONAL PROTEIN GLMU"/>
    <property type="match status" value="1"/>
</dbReference>
<dbReference type="PANTHER" id="PTHR43584">
    <property type="entry name" value="NUCLEOTIDYL TRANSFERASE"/>
    <property type="match status" value="1"/>
</dbReference>
<dbReference type="Pfam" id="PF00132">
    <property type="entry name" value="Hexapep"/>
    <property type="match status" value="2"/>
</dbReference>
<dbReference type="Pfam" id="PF12804">
    <property type="entry name" value="NTP_transf_3"/>
    <property type="match status" value="1"/>
</dbReference>
<dbReference type="SUPFAM" id="SSF53448">
    <property type="entry name" value="Nucleotide-diphospho-sugar transferases"/>
    <property type="match status" value="1"/>
</dbReference>
<dbReference type="SUPFAM" id="SSF51161">
    <property type="entry name" value="Trimeric LpxA-like enzymes"/>
    <property type="match status" value="1"/>
</dbReference>
<dbReference type="PROSITE" id="PS00101">
    <property type="entry name" value="HEXAPEP_TRANSFERASES"/>
    <property type="match status" value="1"/>
</dbReference>
<comment type="function">
    <text evidence="1">Catalyzes the last two sequential reactions in the de novo biosynthetic pathway for UDP-N-acetylglucosamine (UDP-GlcNAc). The C-terminal domain catalyzes the transfer of acetyl group from acetyl coenzyme A to glucosamine-1-phosphate (GlcN-1-P) to produce N-acetylglucosamine-1-phosphate (GlcNAc-1-P), which is converted into UDP-GlcNAc by the transfer of uridine 5-monophosphate (from uridine 5-triphosphate), a reaction catalyzed by the N-terminal domain.</text>
</comment>
<comment type="catalytic activity">
    <reaction evidence="1">
        <text>alpha-D-glucosamine 1-phosphate + acetyl-CoA = N-acetyl-alpha-D-glucosamine 1-phosphate + CoA + H(+)</text>
        <dbReference type="Rhea" id="RHEA:13725"/>
        <dbReference type="ChEBI" id="CHEBI:15378"/>
        <dbReference type="ChEBI" id="CHEBI:57287"/>
        <dbReference type="ChEBI" id="CHEBI:57288"/>
        <dbReference type="ChEBI" id="CHEBI:57776"/>
        <dbReference type="ChEBI" id="CHEBI:58516"/>
        <dbReference type="EC" id="2.3.1.157"/>
    </reaction>
</comment>
<comment type="catalytic activity">
    <reaction evidence="1">
        <text>N-acetyl-alpha-D-glucosamine 1-phosphate + UTP + H(+) = UDP-N-acetyl-alpha-D-glucosamine + diphosphate</text>
        <dbReference type="Rhea" id="RHEA:13509"/>
        <dbReference type="ChEBI" id="CHEBI:15378"/>
        <dbReference type="ChEBI" id="CHEBI:33019"/>
        <dbReference type="ChEBI" id="CHEBI:46398"/>
        <dbReference type="ChEBI" id="CHEBI:57705"/>
        <dbReference type="ChEBI" id="CHEBI:57776"/>
        <dbReference type="EC" id="2.7.7.23"/>
    </reaction>
</comment>
<comment type="cofactor">
    <cofactor evidence="1">
        <name>Mg(2+)</name>
        <dbReference type="ChEBI" id="CHEBI:18420"/>
    </cofactor>
    <text evidence="1">Binds 1 Mg(2+) ion per subunit.</text>
</comment>
<comment type="pathway">
    <text evidence="1">Nucleotide-sugar biosynthesis; UDP-N-acetyl-alpha-D-glucosamine biosynthesis; N-acetyl-alpha-D-glucosamine 1-phosphate from alpha-D-glucosamine 6-phosphate (route II): step 2/2.</text>
</comment>
<comment type="pathway">
    <text evidence="1">Nucleotide-sugar biosynthesis; UDP-N-acetyl-alpha-D-glucosamine biosynthesis; UDP-N-acetyl-alpha-D-glucosamine from N-acetyl-alpha-D-glucosamine 1-phosphate: step 1/1.</text>
</comment>
<comment type="pathway">
    <text evidence="1">Bacterial outer membrane biogenesis; LPS lipid A biosynthesis.</text>
</comment>
<comment type="subunit">
    <text evidence="1">Homotrimer.</text>
</comment>
<comment type="subcellular location">
    <subcellularLocation>
        <location evidence="1">Cytoplasm</location>
    </subcellularLocation>
</comment>
<comment type="similarity">
    <text evidence="1">In the N-terminal section; belongs to the N-acetylglucosamine-1-phosphate uridyltransferase family.</text>
</comment>
<comment type="similarity">
    <text evidence="1">In the C-terminal section; belongs to the transferase hexapeptide repeat family.</text>
</comment>
<feature type="chain" id="PRO_0000233798" description="Bifunctional protein GlmU">
    <location>
        <begin position="1"/>
        <end position="461"/>
    </location>
</feature>
<feature type="region of interest" description="Pyrophosphorylase" evidence="1">
    <location>
        <begin position="1"/>
        <end position="227"/>
    </location>
</feature>
<feature type="region of interest" description="Linker" evidence="1">
    <location>
        <begin position="228"/>
        <end position="248"/>
    </location>
</feature>
<feature type="region of interest" description="N-acetyltransferase" evidence="1">
    <location>
        <begin position="249"/>
        <end position="461"/>
    </location>
</feature>
<feature type="active site" description="Proton acceptor" evidence="1">
    <location>
        <position position="362"/>
    </location>
</feature>
<feature type="binding site" evidence="1">
    <location>
        <begin position="8"/>
        <end position="11"/>
    </location>
    <ligand>
        <name>UDP-N-acetyl-alpha-D-glucosamine</name>
        <dbReference type="ChEBI" id="CHEBI:57705"/>
    </ligand>
</feature>
<feature type="binding site" evidence="1">
    <location>
        <position position="22"/>
    </location>
    <ligand>
        <name>UDP-N-acetyl-alpha-D-glucosamine</name>
        <dbReference type="ChEBI" id="CHEBI:57705"/>
    </ligand>
</feature>
<feature type="binding site" evidence="1">
    <location>
        <position position="73"/>
    </location>
    <ligand>
        <name>UDP-N-acetyl-alpha-D-glucosamine</name>
        <dbReference type="ChEBI" id="CHEBI:57705"/>
    </ligand>
</feature>
<feature type="binding site" evidence="1">
    <location>
        <begin position="78"/>
        <end position="79"/>
    </location>
    <ligand>
        <name>UDP-N-acetyl-alpha-D-glucosamine</name>
        <dbReference type="ChEBI" id="CHEBI:57705"/>
    </ligand>
</feature>
<feature type="binding site" evidence="1">
    <location>
        <begin position="100"/>
        <end position="102"/>
    </location>
    <ligand>
        <name>UDP-N-acetyl-alpha-D-glucosamine</name>
        <dbReference type="ChEBI" id="CHEBI:57705"/>
    </ligand>
</feature>
<feature type="binding site" evidence="1">
    <location>
        <position position="102"/>
    </location>
    <ligand>
        <name>Mg(2+)</name>
        <dbReference type="ChEBI" id="CHEBI:18420"/>
    </ligand>
</feature>
<feature type="binding site" evidence="1">
    <location>
        <position position="137"/>
    </location>
    <ligand>
        <name>UDP-N-acetyl-alpha-D-glucosamine</name>
        <dbReference type="ChEBI" id="CHEBI:57705"/>
    </ligand>
</feature>
<feature type="binding site" evidence="1">
    <location>
        <position position="152"/>
    </location>
    <ligand>
        <name>UDP-N-acetyl-alpha-D-glucosamine</name>
        <dbReference type="ChEBI" id="CHEBI:57705"/>
    </ligand>
</feature>
<feature type="binding site" evidence="1">
    <location>
        <position position="167"/>
    </location>
    <ligand>
        <name>UDP-N-acetyl-alpha-D-glucosamine</name>
        <dbReference type="ChEBI" id="CHEBI:57705"/>
    </ligand>
</feature>
<feature type="binding site" evidence="1">
    <location>
        <position position="225"/>
    </location>
    <ligand>
        <name>Mg(2+)</name>
        <dbReference type="ChEBI" id="CHEBI:18420"/>
    </ligand>
</feature>
<feature type="binding site" evidence="1">
    <location>
        <position position="225"/>
    </location>
    <ligand>
        <name>UDP-N-acetyl-alpha-D-glucosamine</name>
        <dbReference type="ChEBI" id="CHEBI:57705"/>
    </ligand>
</feature>
<feature type="binding site" evidence="1">
    <location>
        <position position="332"/>
    </location>
    <ligand>
        <name>UDP-N-acetyl-alpha-D-glucosamine</name>
        <dbReference type="ChEBI" id="CHEBI:57705"/>
    </ligand>
</feature>
<feature type="binding site" evidence="1">
    <location>
        <position position="350"/>
    </location>
    <ligand>
        <name>UDP-N-acetyl-alpha-D-glucosamine</name>
        <dbReference type="ChEBI" id="CHEBI:57705"/>
    </ligand>
</feature>
<feature type="binding site" evidence="1">
    <location>
        <position position="365"/>
    </location>
    <ligand>
        <name>UDP-N-acetyl-alpha-D-glucosamine</name>
        <dbReference type="ChEBI" id="CHEBI:57705"/>
    </ligand>
</feature>
<feature type="binding site" evidence="1">
    <location>
        <position position="376"/>
    </location>
    <ligand>
        <name>UDP-N-acetyl-alpha-D-glucosamine</name>
        <dbReference type="ChEBI" id="CHEBI:57705"/>
    </ligand>
</feature>
<feature type="binding site" evidence="1">
    <location>
        <position position="379"/>
    </location>
    <ligand>
        <name>acetyl-CoA</name>
        <dbReference type="ChEBI" id="CHEBI:57288"/>
    </ligand>
</feature>
<feature type="binding site" evidence="1">
    <location>
        <begin position="385"/>
        <end position="386"/>
    </location>
    <ligand>
        <name>acetyl-CoA</name>
        <dbReference type="ChEBI" id="CHEBI:57288"/>
    </ligand>
</feature>
<feature type="binding site" evidence="1">
    <location>
        <position position="404"/>
    </location>
    <ligand>
        <name>acetyl-CoA</name>
        <dbReference type="ChEBI" id="CHEBI:57288"/>
    </ligand>
</feature>
<feature type="binding site" evidence="1">
    <location>
        <position position="422"/>
    </location>
    <ligand>
        <name>acetyl-CoA</name>
        <dbReference type="ChEBI" id="CHEBI:57288"/>
    </ligand>
</feature>
<feature type="binding site" evidence="1">
    <location>
        <position position="439"/>
    </location>
    <ligand>
        <name>acetyl-CoA</name>
        <dbReference type="ChEBI" id="CHEBI:57288"/>
    </ligand>
</feature>
<accession>Q60CR2</accession>
<name>GLMU_METCA</name>
<reference key="1">
    <citation type="journal article" date="2004" name="PLoS Biol.">
        <title>Genomic insights into methanotrophy: the complete genome sequence of Methylococcus capsulatus (Bath).</title>
        <authorList>
            <person name="Ward N.L."/>
            <person name="Larsen O."/>
            <person name="Sakwa J."/>
            <person name="Bruseth L."/>
            <person name="Khouri H.M."/>
            <person name="Durkin A.S."/>
            <person name="Dimitrov G."/>
            <person name="Jiang L."/>
            <person name="Scanlan D."/>
            <person name="Kang K.H."/>
            <person name="Lewis M.R."/>
            <person name="Nelson K.E."/>
            <person name="Methe B.A."/>
            <person name="Wu M."/>
            <person name="Heidelberg J.F."/>
            <person name="Paulsen I.T."/>
            <person name="Fouts D.E."/>
            <person name="Ravel J."/>
            <person name="Tettelin H."/>
            <person name="Ren Q."/>
            <person name="Read T.D."/>
            <person name="DeBoy R.T."/>
            <person name="Seshadri R."/>
            <person name="Salzberg S.L."/>
            <person name="Jensen H.B."/>
            <person name="Birkeland N.K."/>
            <person name="Nelson W.C."/>
            <person name="Dodson R.J."/>
            <person name="Grindhaug S.H."/>
            <person name="Holt I.E."/>
            <person name="Eidhammer I."/>
            <person name="Jonasen I."/>
            <person name="Vanaken S."/>
            <person name="Utterback T.R."/>
            <person name="Feldblyum T.V."/>
            <person name="Fraser C.M."/>
            <person name="Lillehaug J.R."/>
            <person name="Eisen J.A."/>
        </authorList>
    </citation>
    <scope>NUCLEOTIDE SEQUENCE [LARGE SCALE GENOMIC DNA]</scope>
    <source>
        <strain>ATCC 33009 / NCIMB 11132 / Bath</strain>
    </source>
</reference>
<sequence length="461" mass="49797">MEVIALILAAGQGTRMRSGLPKVLHRIGGLCLLEHVYRLAAALEVRETVIVYGHGGEQALSALGHLPATWIEQKKRRGTGHAVMQAVDRIGDDSTVLVLYGDVPLLRRETVETLLHHAGESSLGLLTVELDNPTGYGRIIRDASGRVLRIVEEKDATPEERAVREVNTGILAVEGAPLKRWLKALRNDNAQGEYYLTDIVAMAVAEGYFIDATHPTSPDEVLGVNDRRQLAELERIYQVHQARALMERGVTLRDPARFDLRGEIVELGRDVEIDVNVILEGRIALGDEVRIGPNVYLKDTVIGPGVAVLANSVIEGAVIGAGSRVGPFARLRPESVLAEGVHIGNFVEVKQSDIAVGSKVNHLSYIGDASIGRGVNVGAGTITCNYDGVAKHRTIIEDGAFIGSDTQLVAPVRVGRNATIGAGSTITRDTPEDCLTLSRARQLSVEGWKRPEKARKESCAE</sequence>
<keyword id="KW-0012">Acyltransferase</keyword>
<keyword id="KW-0133">Cell shape</keyword>
<keyword id="KW-0961">Cell wall biogenesis/degradation</keyword>
<keyword id="KW-0963">Cytoplasm</keyword>
<keyword id="KW-0460">Magnesium</keyword>
<keyword id="KW-0479">Metal-binding</keyword>
<keyword id="KW-0511">Multifunctional enzyme</keyword>
<keyword id="KW-0548">Nucleotidyltransferase</keyword>
<keyword id="KW-0573">Peptidoglycan synthesis</keyword>
<keyword id="KW-1185">Reference proteome</keyword>
<keyword id="KW-0677">Repeat</keyword>
<keyword id="KW-0808">Transferase</keyword>
<evidence type="ECO:0000255" key="1">
    <source>
        <dbReference type="HAMAP-Rule" id="MF_01631"/>
    </source>
</evidence>
<organism>
    <name type="scientific">Methylococcus capsulatus (strain ATCC 33009 / NCIMB 11132 / Bath)</name>
    <dbReference type="NCBI Taxonomy" id="243233"/>
    <lineage>
        <taxon>Bacteria</taxon>
        <taxon>Pseudomonadati</taxon>
        <taxon>Pseudomonadota</taxon>
        <taxon>Gammaproteobacteria</taxon>
        <taxon>Methylococcales</taxon>
        <taxon>Methylococcaceae</taxon>
        <taxon>Methylococcus</taxon>
    </lineage>
</organism>
<gene>
    <name evidence="1" type="primary">glmU</name>
    <name type="ordered locus">MCA0014</name>
</gene>
<protein>
    <recommendedName>
        <fullName evidence="1">Bifunctional protein GlmU</fullName>
    </recommendedName>
    <domain>
        <recommendedName>
            <fullName evidence="1">UDP-N-acetylglucosamine pyrophosphorylase</fullName>
            <ecNumber evidence="1">2.7.7.23</ecNumber>
        </recommendedName>
        <alternativeName>
            <fullName evidence="1">N-acetylglucosamine-1-phosphate uridyltransferase</fullName>
        </alternativeName>
    </domain>
    <domain>
        <recommendedName>
            <fullName evidence="1">Glucosamine-1-phosphate N-acetyltransferase</fullName>
            <ecNumber evidence="1">2.3.1.157</ecNumber>
        </recommendedName>
    </domain>
</protein>
<proteinExistence type="inferred from homology"/>